<name>YCCA_BACP3</name>
<sequence length="150" mass="16394">STGGTDLAAQIIHKYTGLSLGMCVILIDGLIVLTAAFVFDIERALYALIALYVTSKTIDLVQVGLGYSKIALIITNEEEKVRRAILHEIDRGVTRLPAYGGYTEHERPVLMCVVAQSEFTKLKQLVRTIDPTAFVIVANAAEVLGEGFQR</sequence>
<evidence type="ECO:0000255" key="1"/>
<evidence type="ECO:0000305" key="2"/>
<dbReference type="EMBL" id="X63125">
    <property type="status" value="NOT_ANNOTATED_CDS"/>
    <property type="molecule type" value="Genomic_DNA"/>
</dbReference>
<dbReference type="SMR" id="P55815"/>
<dbReference type="GO" id="GO:0005886">
    <property type="term" value="C:plasma membrane"/>
    <property type="evidence" value="ECO:0007669"/>
    <property type="project" value="UniProtKB-SubCell"/>
</dbReference>
<dbReference type="CDD" id="cd16380">
    <property type="entry name" value="YitT_C"/>
    <property type="match status" value="1"/>
</dbReference>
<dbReference type="Gene3D" id="3.30.70.120">
    <property type="match status" value="1"/>
</dbReference>
<dbReference type="InterPro" id="IPR019264">
    <property type="entry name" value="DUF2179"/>
</dbReference>
<dbReference type="InterPro" id="IPR015867">
    <property type="entry name" value="N-reg_PII/ATP_PRibTrfase_C"/>
</dbReference>
<dbReference type="InterPro" id="IPR051461">
    <property type="entry name" value="UPF0750_membrane"/>
</dbReference>
<dbReference type="InterPro" id="IPR003740">
    <property type="entry name" value="YitT"/>
</dbReference>
<dbReference type="PANTHER" id="PTHR33545:SF9">
    <property type="entry name" value="UPF0750 MEMBRANE PROTEIN YITE"/>
    <property type="match status" value="1"/>
</dbReference>
<dbReference type="PANTHER" id="PTHR33545">
    <property type="entry name" value="UPF0750 MEMBRANE PROTEIN YITT-RELATED"/>
    <property type="match status" value="1"/>
</dbReference>
<dbReference type="Pfam" id="PF10035">
    <property type="entry name" value="DUF2179"/>
    <property type="match status" value="1"/>
</dbReference>
<dbReference type="Pfam" id="PF02588">
    <property type="entry name" value="YitT_membrane"/>
    <property type="match status" value="1"/>
</dbReference>
<reference key="1">
    <citation type="journal article" date="1993" name="Biochim. Biophys. Acta">
        <title>Cytochrome c-551 of the thermophilic bacterium PS3, DNA sequence and analysis of the mature cytochrome.</title>
        <authorList>
            <person name="Fujiwara Y."/>
            <person name="Oka M."/>
            <person name="Hamamoto T."/>
            <person name="Sone N."/>
        </authorList>
    </citation>
    <scope>NUCLEOTIDE SEQUENCE [GENOMIC DNA]</scope>
</reference>
<protein>
    <recommendedName>
        <fullName>Uncharacterized protein in cccA 5'region</fullName>
    </recommendedName>
</protein>
<keyword id="KW-1003">Cell membrane</keyword>
<keyword id="KW-0472">Membrane</keyword>
<keyword id="KW-0812">Transmembrane</keyword>
<keyword id="KW-1133">Transmembrane helix</keyword>
<proteinExistence type="predicted"/>
<comment type="subcellular location">
    <subcellularLocation>
        <location evidence="2">Cell membrane</location>
        <topology evidence="2">Multi-pass membrane protein</topology>
    </subcellularLocation>
</comment>
<comment type="similarity">
    <text evidence="2">To B.subtilis YpjC, YqfU and YitT.</text>
</comment>
<organism>
    <name type="scientific">Bacillus sp. (strain PS3)</name>
    <dbReference type="NCBI Taxonomy" id="2334"/>
    <lineage>
        <taxon>Bacteria</taxon>
        <taxon>Bacillati</taxon>
        <taxon>Bacillota</taxon>
        <taxon>Bacilli</taxon>
        <taxon>Bacillales</taxon>
        <taxon>Bacillaceae</taxon>
        <taxon>Bacillus</taxon>
    </lineage>
</organism>
<feature type="chain" id="PRO_0000066171" description="Uncharacterized protein in cccA 5'region">
    <location>
        <begin position="1" status="less than"/>
        <end position="150"/>
    </location>
</feature>
<feature type="transmembrane region" description="Helical" evidence="1">
    <location>
        <begin position="19"/>
        <end position="39"/>
    </location>
</feature>
<feature type="non-terminal residue">
    <location>
        <position position="1"/>
    </location>
</feature>
<accession>P55815</accession>